<feature type="transit peptide" description="Chloroplast" evidence="2">
    <location>
        <begin position="1"/>
        <end position="52"/>
    </location>
</feature>
<feature type="chain" id="PRO_0000205232" description="Isopentenyl-diphosphate Delta-isomerase I, chloroplastic">
    <location>
        <begin position="53"/>
        <end position="291"/>
    </location>
</feature>
<feature type="domain" description="Nudix hydrolase" evidence="3">
    <location>
        <begin position="109"/>
        <end position="261"/>
    </location>
</feature>
<feature type="region of interest" description="Disordered" evidence="4">
    <location>
        <begin position="20"/>
        <end position="43"/>
    </location>
</feature>
<feature type="short sequence motif" description="Nudix box">
    <location>
        <begin position="147"/>
        <end position="177"/>
    </location>
</feature>
<feature type="compositionally biased region" description="Low complexity" evidence="4">
    <location>
        <begin position="20"/>
        <end position="39"/>
    </location>
</feature>
<feature type="active site" evidence="1">
    <location>
        <position position="146"/>
    </location>
</feature>
<feature type="active site" evidence="1">
    <location>
        <position position="208"/>
    </location>
</feature>
<feature type="binding site" evidence="1">
    <location>
        <position position="95"/>
    </location>
    <ligand>
        <name>substrate</name>
    </ligand>
</feature>
<feature type="binding site" evidence="1">
    <location>
        <position position="99"/>
    </location>
    <ligand>
        <name>Mg(2+)</name>
        <dbReference type="ChEBI" id="CHEBI:18420"/>
    </ligand>
</feature>
<feature type="binding site" evidence="1">
    <location>
        <position position="111"/>
    </location>
    <ligand>
        <name>Mg(2+)</name>
        <dbReference type="ChEBI" id="CHEBI:18420"/>
    </ligand>
</feature>
<feature type="binding site" evidence="1">
    <location>
        <position position="130"/>
    </location>
    <ligand>
        <name>substrate</name>
    </ligand>
</feature>
<feature type="binding site" evidence="1">
    <location>
        <position position="134"/>
    </location>
    <ligand>
        <name>substrate</name>
    </ligand>
</feature>
<feature type="binding site" evidence="1">
    <location>
        <position position="147"/>
    </location>
    <ligand>
        <name>substrate</name>
    </ligand>
</feature>
<feature type="binding site" evidence="1">
    <location>
        <position position="206"/>
    </location>
    <ligand>
        <name>Mg(2+)</name>
        <dbReference type="ChEBI" id="CHEBI:18420"/>
    </ligand>
</feature>
<feature type="binding site" evidence="1">
    <location>
        <position position="208"/>
    </location>
    <ligand>
        <name>Mg(2+)</name>
        <dbReference type="ChEBI" id="CHEBI:18420"/>
    </ligand>
</feature>
<feature type="splice variant" id="VSP_059338" description="In isoform 2.">
    <location>
        <begin position="1"/>
        <end position="58"/>
    </location>
</feature>
<feature type="sequence conflict" description="In Ref. 4; AAC49932." evidence="5" ref="4">
    <original>KLS</original>
    <variation>NYL</variation>
    <location>
        <begin position="254"/>
        <end position="256"/>
    </location>
</feature>
<feature type="initiator methionine" description="Removed" evidence="6">
    <location sequence="Q38929-2">
        <position position="1"/>
    </location>
</feature>
<feature type="modified residue" description="N-acetylthreonine" evidence="6">
    <location sequence="Q38929-2">
        <position position="2"/>
    </location>
</feature>
<sequence length="291" mass="33214">MSTASLFSFPSFHLRSLLPSLSSSSSSSSSRFAPPRLSPIRSPAPRTQLSVRAFSAVTMTDSNDAGMDAVQRRLMFEDECILVDENDRVVGHDTKYNCHLMEKIEAENLLHRAFSVFLFNSKYELLLQQRSKTKVTFPLVWTNTCCSHPLYRESELIEENVLGVRNAAQRKLFDELGIVAEDVPVDEFTPLGRMLYKAPSDGKWGEHEVDYLLFIVRDVKLQPNPDEVAEIKYVSREELKELVKKADAGDEAVKLSPWFRLVVDNFLMKWWDHVEKGTITEAADMKTIHKL</sequence>
<name>IDI1_ARATH</name>
<evidence type="ECO:0000250" key="1"/>
<evidence type="ECO:0000255" key="2"/>
<evidence type="ECO:0000255" key="3">
    <source>
        <dbReference type="PROSITE-ProRule" id="PRU00794"/>
    </source>
</evidence>
<evidence type="ECO:0000256" key="4">
    <source>
        <dbReference type="SAM" id="MobiDB-lite"/>
    </source>
</evidence>
<evidence type="ECO:0000305" key="5"/>
<evidence type="ECO:0007744" key="6">
    <source>
    </source>
</evidence>
<comment type="function">
    <text evidence="1">Catalyzes the 1,3-allylic rearrangement of the homoallylic substrate isopentenyl (IPP) to its highly electrophilic allylic isomer, dimethylallyl diphosphate (DMAPP).</text>
</comment>
<comment type="catalytic activity">
    <reaction>
        <text>isopentenyl diphosphate = dimethylallyl diphosphate</text>
        <dbReference type="Rhea" id="RHEA:23284"/>
        <dbReference type="ChEBI" id="CHEBI:57623"/>
        <dbReference type="ChEBI" id="CHEBI:128769"/>
        <dbReference type="EC" id="5.3.3.2"/>
    </reaction>
</comment>
<comment type="cofactor">
    <cofactor evidence="1">
        <name>Mg(2+)</name>
        <dbReference type="ChEBI" id="CHEBI:18420"/>
    </cofactor>
    <text evidence="1">Binds 1 Mg(2+) ion per subunit.</text>
</comment>
<comment type="pathway">
    <text>Isoprenoid biosynthesis; dimethylallyl diphosphate biosynthesis; dimethylallyl diphosphate from isopentenyl diphosphate: step 1/1.</text>
</comment>
<comment type="pathway">
    <text>Porphyrin-containing compound metabolism; chlorophyll biosynthesis.</text>
</comment>
<comment type="subcellular location">
    <molecule>Isoform 1</molecule>
    <subcellularLocation>
        <location evidence="5">Plastid</location>
        <location evidence="5">Chloroplast</location>
    </subcellularLocation>
</comment>
<comment type="subcellular location">
    <molecule>Isoform 2</molecule>
    <subcellularLocation>
        <location evidence="5">Cytoplasm</location>
    </subcellularLocation>
</comment>
<comment type="alternative products">
    <event type="alternative initiation"/>
    <isoform>
        <id>Q38929-1</id>
        <name>1</name>
        <sequence type="displayed"/>
    </isoform>
    <isoform>
        <id>Q38929-2</id>
        <name>2</name>
        <sequence type="described" ref="VSP_059338"/>
    </isoform>
</comment>
<comment type="miscellaneous">
    <molecule>Isoform 2</molecule>
    <text evidence="5">Produced by alternative initiation at Met-59 of isoform 1.</text>
</comment>
<comment type="similarity">
    <text evidence="5">Belongs to the IPP isomerase type 1 family.</text>
</comment>
<comment type="sequence caution" evidence="5">
    <conflict type="erroneous initiation">
        <sequence resource="EMBL-CDS" id="AAB67741"/>
    </conflict>
    <text>Truncated N-terminus.</text>
</comment>
<comment type="sequence caution" evidence="5">
    <conflict type="erroneous initiation">
        <sequence resource="EMBL-CDS" id="AAC49932"/>
    </conflict>
    <text>Truncated N-terminus.</text>
</comment>
<comment type="sequence caution" evidence="5">
    <conflict type="erroneous initiation">
        <sequence resource="EMBL-CDS" id="AAL57687"/>
    </conflict>
    <text>Truncated N-terminus.</text>
</comment>
<dbReference type="EC" id="5.3.3.2"/>
<dbReference type="EMBL" id="AB005242">
    <property type="protein sequence ID" value="BAB09611.1"/>
    <property type="molecule type" value="Genomic_DNA"/>
</dbReference>
<dbReference type="EMBL" id="CP002688">
    <property type="protein sequence ID" value="AED92292.1"/>
    <property type="molecule type" value="Genomic_DNA"/>
</dbReference>
<dbReference type="EMBL" id="AY065053">
    <property type="protein sequence ID" value="AAL57687.1"/>
    <property type="status" value="ALT_INIT"/>
    <property type="molecule type" value="mRNA"/>
</dbReference>
<dbReference type="EMBL" id="AY093749">
    <property type="protein sequence ID" value="AAM10373.1"/>
    <property type="molecule type" value="mRNA"/>
</dbReference>
<dbReference type="EMBL" id="U47324">
    <property type="protein sequence ID" value="AAC49932.1"/>
    <property type="status" value="ALT_INIT"/>
    <property type="molecule type" value="Genomic_DNA"/>
</dbReference>
<dbReference type="EMBL" id="U48961">
    <property type="protein sequence ID" value="AAB67741.1"/>
    <property type="status" value="ALT_INIT"/>
    <property type="molecule type" value="mRNA"/>
</dbReference>
<dbReference type="PIR" id="S71369">
    <property type="entry name" value="S71369"/>
</dbReference>
<dbReference type="RefSeq" id="NP_197148.3">
    <molecule id="Q38929-1"/>
    <property type="nucleotide sequence ID" value="NM_121649.6"/>
</dbReference>
<dbReference type="SMR" id="Q38929"/>
<dbReference type="BioGRID" id="16781">
    <property type="interactions" value="1"/>
</dbReference>
<dbReference type="FunCoup" id="Q38929">
    <property type="interactions" value="3089"/>
</dbReference>
<dbReference type="STRING" id="3702.Q38929"/>
<dbReference type="iPTMnet" id="Q38929"/>
<dbReference type="MetOSite" id="Q38929"/>
<dbReference type="PaxDb" id="3702-AT5G16440.1"/>
<dbReference type="ProteomicsDB" id="232095">
    <molecule id="Q38929-1"/>
</dbReference>
<dbReference type="EnsemblPlants" id="AT5G16440.1">
    <molecule id="Q38929-1"/>
    <property type="protein sequence ID" value="AT5G16440.1"/>
    <property type="gene ID" value="AT5G16440"/>
</dbReference>
<dbReference type="GeneID" id="831505"/>
<dbReference type="Gramene" id="AT5G16440.1">
    <molecule id="Q38929-1"/>
    <property type="protein sequence ID" value="AT5G16440.1"/>
    <property type="gene ID" value="AT5G16440"/>
</dbReference>
<dbReference type="KEGG" id="ath:AT5G16440"/>
<dbReference type="Araport" id="AT5G16440"/>
<dbReference type="TAIR" id="AT5G16440">
    <property type="gene designation" value="IPP1"/>
</dbReference>
<dbReference type="eggNOG" id="KOG0142">
    <property type="taxonomic scope" value="Eukaryota"/>
</dbReference>
<dbReference type="HOGENOM" id="CLU_060552_0_0_1"/>
<dbReference type="InParanoid" id="Q38929"/>
<dbReference type="OMA" id="VEQEYNH"/>
<dbReference type="OrthoDB" id="510307at2759"/>
<dbReference type="BioCyc" id="ARA:AT5G16440-MONOMER"/>
<dbReference type="BioCyc" id="MetaCyc:AT5G16440-MONOMER"/>
<dbReference type="BRENDA" id="5.3.3.2">
    <property type="organism ID" value="399"/>
</dbReference>
<dbReference type="UniPathway" id="UPA00059">
    <property type="reaction ID" value="UER00104"/>
</dbReference>
<dbReference type="UniPathway" id="UPA00668"/>
<dbReference type="PRO" id="PR:Q38929"/>
<dbReference type="Proteomes" id="UP000006548">
    <property type="component" value="Chromosome 5"/>
</dbReference>
<dbReference type="ExpressionAtlas" id="Q38929">
    <property type="expression patterns" value="baseline and differential"/>
</dbReference>
<dbReference type="GO" id="GO:0009507">
    <property type="term" value="C:chloroplast"/>
    <property type="evidence" value="ECO:0007005"/>
    <property type="project" value="TAIR"/>
</dbReference>
<dbReference type="GO" id="GO:0005829">
    <property type="term" value="C:cytosol"/>
    <property type="evidence" value="ECO:0000314"/>
    <property type="project" value="TAIR"/>
</dbReference>
<dbReference type="GO" id="GO:0009536">
    <property type="term" value="C:plastid"/>
    <property type="evidence" value="ECO:0000314"/>
    <property type="project" value="TAIR"/>
</dbReference>
<dbReference type="GO" id="GO:0004452">
    <property type="term" value="F:isopentenyl-diphosphate delta-isomerase activity"/>
    <property type="evidence" value="ECO:0000315"/>
    <property type="project" value="TAIR"/>
</dbReference>
<dbReference type="GO" id="GO:0046872">
    <property type="term" value="F:metal ion binding"/>
    <property type="evidence" value="ECO:0007669"/>
    <property type="project" value="UniProtKB-KW"/>
</dbReference>
<dbReference type="GO" id="GO:0015995">
    <property type="term" value="P:chlorophyll biosynthetic process"/>
    <property type="evidence" value="ECO:0007669"/>
    <property type="project" value="UniProtKB-UniPathway"/>
</dbReference>
<dbReference type="GO" id="GO:0050992">
    <property type="term" value="P:dimethylallyl diphosphate biosynthetic process"/>
    <property type="evidence" value="ECO:0007669"/>
    <property type="project" value="UniProtKB-UniPathway"/>
</dbReference>
<dbReference type="GO" id="GO:0009240">
    <property type="term" value="P:isopentenyl diphosphate biosynthetic process"/>
    <property type="evidence" value="ECO:0000315"/>
    <property type="project" value="TAIR"/>
</dbReference>
<dbReference type="GO" id="GO:0015979">
    <property type="term" value="P:photosynthesis"/>
    <property type="evidence" value="ECO:0007669"/>
    <property type="project" value="UniProtKB-KW"/>
</dbReference>
<dbReference type="CDD" id="cd02885">
    <property type="entry name" value="NUDIX_IPP_Isomerase"/>
    <property type="match status" value="1"/>
</dbReference>
<dbReference type="FunFam" id="3.90.79.10:FF:000025">
    <property type="entry name" value="isopentenyl-diphosphate Delta-isomerase I"/>
    <property type="match status" value="1"/>
</dbReference>
<dbReference type="Gene3D" id="3.90.79.10">
    <property type="entry name" value="Nucleoside Triphosphate Pyrophosphohydrolase"/>
    <property type="match status" value="1"/>
</dbReference>
<dbReference type="InterPro" id="IPR011876">
    <property type="entry name" value="IsopentenylPP_isomerase_typ1"/>
</dbReference>
<dbReference type="InterPro" id="IPR015797">
    <property type="entry name" value="NUDIX_hydrolase-like_dom_sf"/>
</dbReference>
<dbReference type="InterPro" id="IPR000086">
    <property type="entry name" value="NUDIX_hydrolase_dom"/>
</dbReference>
<dbReference type="NCBIfam" id="TIGR02150">
    <property type="entry name" value="IPP_isom_1"/>
    <property type="match status" value="1"/>
</dbReference>
<dbReference type="PANTHER" id="PTHR10885">
    <property type="entry name" value="ISOPENTENYL-DIPHOSPHATE DELTA-ISOMERASE"/>
    <property type="match status" value="1"/>
</dbReference>
<dbReference type="PANTHER" id="PTHR10885:SF17">
    <property type="entry name" value="ISOPENTENYL-DIPHOSPHATE DELTA-ISOMERASE I, CHLOROPLASTIC"/>
    <property type="match status" value="1"/>
</dbReference>
<dbReference type="Pfam" id="PF00293">
    <property type="entry name" value="NUDIX"/>
    <property type="match status" value="1"/>
</dbReference>
<dbReference type="SUPFAM" id="SSF55811">
    <property type="entry name" value="Nudix"/>
    <property type="match status" value="1"/>
</dbReference>
<dbReference type="PROSITE" id="PS51462">
    <property type="entry name" value="NUDIX"/>
    <property type="match status" value="1"/>
</dbReference>
<keyword id="KW-0007">Acetylation</keyword>
<keyword id="KW-0024">Alternative initiation</keyword>
<keyword id="KW-0149">Chlorophyll biosynthesis</keyword>
<keyword id="KW-0150">Chloroplast</keyword>
<keyword id="KW-0963">Cytoplasm</keyword>
<keyword id="KW-0413">Isomerase</keyword>
<keyword id="KW-0414">Isoprene biosynthesis</keyword>
<keyword id="KW-0460">Magnesium</keyword>
<keyword id="KW-0479">Metal-binding</keyword>
<keyword id="KW-0602">Photosynthesis</keyword>
<keyword id="KW-0934">Plastid</keyword>
<keyword id="KW-1185">Reference proteome</keyword>
<keyword id="KW-0809">Transit peptide</keyword>
<accession>Q38929</accession>
<accession>Q42552</accession>
<accession>Q9FFE1</accession>
<organism>
    <name type="scientific">Arabidopsis thaliana</name>
    <name type="common">Mouse-ear cress</name>
    <dbReference type="NCBI Taxonomy" id="3702"/>
    <lineage>
        <taxon>Eukaryota</taxon>
        <taxon>Viridiplantae</taxon>
        <taxon>Streptophyta</taxon>
        <taxon>Embryophyta</taxon>
        <taxon>Tracheophyta</taxon>
        <taxon>Spermatophyta</taxon>
        <taxon>Magnoliopsida</taxon>
        <taxon>eudicotyledons</taxon>
        <taxon>Gunneridae</taxon>
        <taxon>Pentapetalae</taxon>
        <taxon>rosids</taxon>
        <taxon>malvids</taxon>
        <taxon>Brassicales</taxon>
        <taxon>Brassicaceae</taxon>
        <taxon>Camelineae</taxon>
        <taxon>Arabidopsis</taxon>
    </lineage>
</organism>
<gene>
    <name type="primary">IPP1</name>
    <name type="synonym">IPI1</name>
    <name type="ordered locus">At5g16440</name>
    <name type="ORF">MQK4.17</name>
</gene>
<protein>
    <recommendedName>
        <fullName>Isopentenyl-diphosphate Delta-isomerase I, chloroplastic</fullName>
        <ecNumber>5.3.3.2</ecNumber>
    </recommendedName>
    <alternativeName>
        <fullName>Isopentenyl pyrophosphate isomerase I</fullName>
        <shortName>IPP isomerase I</shortName>
    </alternativeName>
</protein>
<proteinExistence type="evidence at protein level"/>
<reference key="1">
    <citation type="journal article" date="1997" name="DNA Res.">
        <title>Structural analysis of Arabidopsis thaliana chromosome 5. I. Sequence features of the 1.6 Mb regions covered by twenty physically assigned P1 clones.</title>
        <authorList>
            <person name="Sato S."/>
            <person name="Kotani H."/>
            <person name="Nakamura Y."/>
            <person name="Kaneko T."/>
            <person name="Asamizu E."/>
            <person name="Fukami M."/>
            <person name="Miyajima N."/>
            <person name="Tabata S."/>
        </authorList>
    </citation>
    <scope>NUCLEOTIDE SEQUENCE [LARGE SCALE GENOMIC DNA]</scope>
    <source>
        <strain>cv. Columbia</strain>
    </source>
</reference>
<reference key="2">
    <citation type="journal article" date="2017" name="Plant J.">
        <title>Araport11: a complete reannotation of the Arabidopsis thaliana reference genome.</title>
        <authorList>
            <person name="Cheng C.Y."/>
            <person name="Krishnakumar V."/>
            <person name="Chan A.P."/>
            <person name="Thibaud-Nissen F."/>
            <person name="Schobel S."/>
            <person name="Town C.D."/>
        </authorList>
    </citation>
    <scope>GENOME REANNOTATION</scope>
    <source>
        <strain>cv. Columbia</strain>
    </source>
</reference>
<reference key="3">
    <citation type="journal article" date="2003" name="Science">
        <title>Empirical analysis of transcriptional activity in the Arabidopsis genome.</title>
        <authorList>
            <person name="Yamada K."/>
            <person name="Lim J."/>
            <person name="Dale J.M."/>
            <person name="Chen H."/>
            <person name="Shinn P."/>
            <person name="Palm C.J."/>
            <person name="Southwick A.M."/>
            <person name="Wu H.C."/>
            <person name="Kim C.J."/>
            <person name="Nguyen M."/>
            <person name="Pham P.K."/>
            <person name="Cheuk R.F."/>
            <person name="Karlin-Newmann G."/>
            <person name="Liu S.X."/>
            <person name="Lam B."/>
            <person name="Sakano H."/>
            <person name="Wu T."/>
            <person name="Yu G."/>
            <person name="Miranda M."/>
            <person name="Quach H.L."/>
            <person name="Tripp M."/>
            <person name="Chang C.H."/>
            <person name="Lee J.M."/>
            <person name="Toriumi M.J."/>
            <person name="Chan M.M."/>
            <person name="Tang C.C."/>
            <person name="Onodera C.S."/>
            <person name="Deng J.M."/>
            <person name="Akiyama K."/>
            <person name="Ansari Y."/>
            <person name="Arakawa T."/>
            <person name="Banh J."/>
            <person name="Banno F."/>
            <person name="Bowser L."/>
            <person name="Brooks S.Y."/>
            <person name="Carninci P."/>
            <person name="Chao Q."/>
            <person name="Choy N."/>
            <person name="Enju A."/>
            <person name="Goldsmith A.D."/>
            <person name="Gurjal M."/>
            <person name="Hansen N.F."/>
            <person name="Hayashizaki Y."/>
            <person name="Johnson-Hopson C."/>
            <person name="Hsuan V.W."/>
            <person name="Iida K."/>
            <person name="Karnes M."/>
            <person name="Khan S."/>
            <person name="Koesema E."/>
            <person name="Ishida J."/>
            <person name="Jiang P.X."/>
            <person name="Jones T."/>
            <person name="Kawai J."/>
            <person name="Kamiya A."/>
            <person name="Meyers C."/>
            <person name="Nakajima M."/>
            <person name="Narusaka M."/>
            <person name="Seki M."/>
            <person name="Sakurai T."/>
            <person name="Satou M."/>
            <person name="Tamse R."/>
            <person name="Vaysberg M."/>
            <person name="Wallender E.K."/>
            <person name="Wong C."/>
            <person name="Yamamura Y."/>
            <person name="Yuan S."/>
            <person name="Shinozaki K."/>
            <person name="Davis R.W."/>
            <person name="Theologis A."/>
            <person name="Ecker J.R."/>
        </authorList>
    </citation>
    <scope>NUCLEOTIDE SEQUENCE [LARGE SCALE MRNA] OF 3-291 AND 58-291</scope>
    <source>
        <strain>cv. Columbia</strain>
    </source>
</reference>
<reference key="4">
    <citation type="journal article" date="1998" name="Plant Mol. Biol.">
        <title>Analysis of the isopentenyl diphosphate isomerase gene family from Arabidopsis thaliana.</title>
        <authorList>
            <person name="Campbell M."/>
            <person name="Hahn F.M."/>
            <person name="Poulter C.D."/>
            <person name="Leustek T."/>
        </authorList>
    </citation>
    <scope>NUCLEOTIDE SEQUENCE [GENOMIC DNA] OF 28-291</scope>
</reference>
<reference key="5">
    <citation type="online journal article" date="1996" name="Plant Gene Register">
        <title>Nucleotide sequences of Ipi genes from Arabidopsis and Clarkia.</title>
        <authorList>
            <person name="Blanc V.M."/>
            <person name="Mullin K."/>
            <person name="Pichersky E."/>
        </authorList>
        <locator>PGR96-036</locator>
    </citation>
    <scope>NUCLEOTIDE SEQUENCE [MRNA] OF 31-291</scope>
</reference>
<reference key="6">
    <citation type="journal article" date="2012" name="Mol. Cell. Proteomics">
        <title>Comparative large-scale characterisation of plant vs. mammal proteins reveals similar and idiosyncratic N-alpha acetylation features.</title>
        <authorList>
            <person name="Bienvenut W.V."/>
            <person name="Sumpton D."/>
            <person name="Martinez A."/>
            <person name="Lilla S."/>
            <person name="Espagne C."/>
            <person name="Meinnel T."/>
            <person name="Giglione C."/>
        </authorList>
    </citation>
    <scope>ACETYLATION [LARGE SCALE ANALYSIS] AT THR-2 (ISOFORM 2)</scope>
    <scope>CLEAVAGE OF INITIATOR METHIONINE [LARGE SCALE ANALYSIS] (ISOFORM 2)</scope>
    <scope>IDENTIFICATION BY MASS SPECTROMETRY [LARGE SCALE ANALYSIS]</scope>
</reference>